<keyword id="KW-0175">Coiled coil</keyword>
<keyword id="KW-0574">Periplasm</keyword>
<keyword id="KW-0732">Signal</keyword>
<evidence type="ECO:0000255" key="1">
    <source>
        <dbReference type="HAMAP-Rule" id="MF_01304"/>
    </source>
</evidence>
<comment type="subcellular location">
    <subcellularLocation>
        <location evidence="1">Periplasm</location>
    </subcellularLocation>
</comment>
<comment type="similarity">
    <text evidence="1">Belongs to the UPF0194 family.</text>
</comment>
<sequence>MKKPVVIGLAVVVLAAVVAGGYWWYQSRQDNGLTLYGNVDIRTVNLSFRVGGRVESLAVDEGDAIKAGQVLGELDHKPYEIALMQAKAGVSVAQAQYDLMLAGYRDEEIAQAAAAVKQAQAAYDYAQNFYNRQQGLWKSRTISANDLENARSSRDQAQATLKSAQDKLRQYRSGNREQDIAQAKASLEQAQAQLAQAELNLQDSTLIAPSDGTLLTRAVEPGTVLNEGGTVFTVSLTRPVWVRAYVDERNLDQAQPGRKVLLYTDGRPDKPYHGQIGFVSPTAEFTPKTVETPDLRTDLVYRLRIVVTDADDALRQGMPVTVQFGDEAGHE</sequence>
<gene>
    <name evidence="1" type="primary">ybhG</name>
    <name type="ordered locus">EcSMS35_0818</name>
</gene>
<organism>
    <name type="scientific">Escherichia coli (strain SMS-3-5 / SECEC)</name>
    <dbReference type="NCBI Taxonomy" id="439855"/>
    <lineage>
        <taxon>Bacteria</taxon>
        <taxon>Pseudomonadati</taxon>
        <taxon>Pseudomonadota</taxon>
        <taxon>Gammaproteobacteria</taxon>
        <taxon>Enterobacterales</taxon>
        <taxon>Enterobacteriaceae</taxon>
        <taxon>Escherichia</taxon>
    </lineage>
</organism>
<accession>B1LM86</accession>
<dbReference type="EMBL" id="CP000970">
    <property type="protein sequence ID" value="ACB18944.1"/>
    <property type="molecule type" value="Genomic_DNA"/>
</dbReference>
<dbReference type="SMR" id="B1LM86"/>
<dbReference type="KEGG" id="ecm:EcSMS35_0818"/>
<dbReference type="HOGENOM" id="CLU_018816_6_3_6"/>
<dbReference type="Proteomes" id="UP000007011">
    <property type="component" value="Chromosome"/>
</dbReference>
<dbReference type="GO" id="GO:0042597">
    <property type="term" value="C:periplasmic space"/>
    <property type="evidence" value="ECO:0007669"/>
    <property type="project" value="UniProtKB-SubCell"/>
</dbReference>
<dbReference type="FunFam" id="1.10.287.470:FF:000004">
    <property type="entry name" value="UPF0194 membrane protein YbhG"/>
    <property type="match status" value="1"/>
</dbReference>
<dbReference type="FunFam" id="2.40.30.170:FF:000005">
    <property type="entry name" value="UPF0194 membrane protein YbhG"/>
    <property type="match status" value="1"/>
</dbReference>
<dbReference type="FunFam" id="2.40.50.100:FF:000025">
    <property type="entry name" value="UPF0194 membrane protein YbhG"/>
    <property type="match status" value="1"/>
</dbReference>
<dbReference type="Gene3D" id="2.40.30.170">
    <property type="match status" value="1"/>
</dbReference>
<dbReference type="Gene3D" id="2.40.50.100">
    <property type="match status" value="2"/>
</dbReference>
<dbReference type="Gene3D" id="1.10.287.470">
    <property type="entry name" value="Helix hairpin bin"/>
    <property type="match status" value="2"/>
</dbReference>
<dbReference type="HAMAP" id="MF_01304">
    <property type="entry name" value="UPF0194"/>
    <property type="match status" value="1"/>
</dbReference>
<dbReference type="InterPro" id="IPR032317">
    <property type="entry name" value="CusB_D23"/>
</dbReference>
<dbReference type="InterPro" id="IPR022936">
    <property type="entry name" value="UPF0194_membrane_YbhG"/>
</dbReference>
<dbReference type="InterPro" id="IPR050465">
    <property type="entry name" value="UPF0194_transport"/>
</dbReference>
<dbReference type="NCBIfam" id="NF002939">
    <property type="entry name" value="PRK03598.1"/>
    <property type="match status" value="1"/>
</dbReference>
<dbReference type="PANTHER" id="PTHR32347">
    <property type="entry name" value="EFFLUX SYSTEM COMPONENT YKNX-RELATED"/>
    <property type="match status" value="1"/>
</dbReference>
<dbReference type="PANTHER" id="PTHR32347:SF29">
    <property type="entry name" value="UPF0194 MEMBRANE PROTEIN YBHG"/>
    <property type="match status" value="1"/>
</dbReference>
<dbReference type="Pfam" id="PF16576">
    <property type="entry name" value="HlyD_D23"/>
    <property type="match status" value="1"/>
</dbReference>
<dbReference type="SUPFAM" id="SSF111369">
    <property type="entry name" value="HlyD-like secretion proteins"/>
    <property type="match status" value="3"/>
</dbReference>
<reference key="1">
    <citation type="journal article" date="2008" name="J. Bacteriol.">
        <title>Insights into the environmental resistance gene pool from the genome sequence of the multidrug-resistant environmental isolate Escherichia coli SMS-3-5.</title>
        <authorList>
            <person name="Fricke W.F."/>
            <person name="Wright M.S."/>
            <person name="Lindell A.H."/>
            <person name="Harkins D.M."/>
            <person name="Baker-Austin C."/>
            <person name="Ravel J."/>
            <person name="Stepanauskas R."/>
        </authorList>
    </citation>
    <scope>NUCLEOTIDE SEQUENCE [LARGE SCALE GENOMIC DNA]</scope>
    <source>
        <strain>SMS-3-5 / SECEC</strain>
    </source>
</reference>
<feature type="signal peptide" evidence="1">
    <location>
        <begin position="1"/>
        <end position="15"/>
    </location>
</feature>
<feature type="chain" id="PRO_1000140655" description="UPF0194 membrane protein YbhG">
    <location>
        <begin position="16"/>
        <end position="331"/>
    </location>
</feature>
<feature type="coiled-coil region" evidence="1">
    <location>
        <begin position="107"/>
        <end position="208"/>
    </location>
</feature>
<protein>
    <recommendedName>
        <fullName evidence="1">UPF0194 membrane protein YbhG</fullName>
    </recommendedName>
</protein>
<name>YBHG_ECOSM</name>
<proteinExistence type="inferred from homology"/>